<comment type="function">
    <text evidence="1">Alpha-L-arabinofuranosidase involved in the degradation of arabinoxylan, a major component of plant hemicellulose. Acts only on small linear 1,5-alpha-linked L-arabinofuranosyl oligosaccharides (By similarity).</text>
</comment>
<comment type="catalytic activity">
    <reaction>
        <text>Hydrolysis of terminal non-reducing alpha-L-arabinofuranoside residues in alpha-L-arabinosides.</text>
        <dbReference type="EC" id="3.2.1.55"/>
    </reaction>
</comment>
<comment type="pathway">
    <text>Glycan metabolism; L-arabinan degradation.</text>
</comment>
<comment type="subcellular location">
    <subcellularLocation>
        <location evidence="1">Secreted</location>
    </subcellularLocation>
</comment>
<comment type="similarity">
    <text evidence="3">Belongs to the glycosyl hydrolase 51 family.</text>
</comment>
<comment type="sequence caution" evidence="3">
    <conflict type="erroneous gene model prediction">
        <sequence resource="EMBL-CDS" id="EAW07844"/>
    </conflict>
</comment>
<reference key="1">
    <citation type="journal article" date="2008" name="PLoS Genet.">
        <title>Genomic islands in the pathogenic filamentous fungus Aspergillus fumigatus.</title>
        <authorList>
            <person name="Fedorova N.D."/>
            <person name="Khaldi N."/>
            <person name="Joardar V.S."/>
            <person name="Maiti R."/>
            <person name="Amedeo P."/>
            <person name="Anderson M.J."/>
            <person name="Crabtree J."/>
            <person name="Silva J.C."/>
            <person name="Badger J.H."/>
            <person name="Albarraq A."/>
            <person name="Angiuoli S."/>
            <person name="Bussey H."/>
            <person name="Bowyer P."/>
            <person name="Cotty P.J."/>
            <person name="Dyer P.S."/>
            <person name="Egan A."/>
            <person name="Galens K."/>
            <person name="Fraser-Liggett C.M."/>
            <person name="Haas B.J."/>
            <person name="Inman J.M."/>
            <person name="Kent R."/>
            <person name="Lemieux S."/>
            <person name="Malavazi I."/>
            <person name="Orvis J."/>
            <person name="Roemer T."/>
            <person name="Ronning C.M."/>
            <person name="Sundaram J.P."/>
            <person name="Sutton G."/>
            <person name="Turner G."/>
            <person name="Venter J.C."/>
            <person name="White O.R."/>
            <person name="Whitty B.R."/>
            <person name="Youngman P."/>
            <person name="Wolfe K.H."/>
            <person name="Goldman G.H."/>
            <person name="Wortman J.R."/>
            <person name="Jiang B."/>
            <person name="Denning D.W."/>
            <person name="Nierman W.C."/>
        </authorList>
    </citation>
    <scope>NUCLEOTIDE SEQUENCE [LARGE SCALE GENOMIC DNA]</scope>
    <source>
        <strain>ATCC 1007 / CBS 513.65 / DSM 816 / NCTC 3887 / NRRL 1 / QM 1276 / 107</strain>
    </source>
</reference>
<accession>A1CQC3</accession>
<protein>
    <recommendedName>
        <fullName>Probable alpha-L-arabinofuranosidase C</fullName>
        <shortName>ABF C</shortName>
        <shortName>Arabinosidase C</shortName>
        <ecNumber>3.2.1.55</ecNumber>
    </recommendedName>
</protein>
<name>ABFC_ASPCL</name>
<gene>
    <name type="primary">abfC</name>
    <name type="ORF">ACLA_025610</name>
</gene>
<dbReference type="EC" id="3.2.1.55"/>
<dbReference type="EMBL" id="DS027059">
    <property type="protein sequence ID" value="EAW07844.1"/>
    <property type="status" value="ALT_SEQ"/>
    <property type="molecule type" value="Genomic_DNA"/>
</dbReference>
<dbReference type="RefSeq" id="XP_001269270.1">
    <property type="nucleotide sequence ID" value="XM_001269269.1"/>
</dbReference>
<dbReference type="SMR" id="A1CQC3"/>
<dbReference type="STRING" id="344612.A1CQC3"/>
<dbReference type="GlyCosmos" id="A1CQC3">
    <property type="glycosylation" value="3 sites, No reported glycans"/>
</dbReference>
<dbReference type="GeneID" id="4702002"/>
<dbReference type="KEGG" id="act:ACLA_025610"/>
<dbReference type="eggNOG" id="ENOG502QRW4">
    <property type="taxonomic scope" value="Eukaryota"/>
</dbReference>
<dbReference type="OrthoDB" id="3032304at2759"/>
<dbReference type="UniPathway" id="UPA00667"/>
<dbReference type="Proteomes" id="UP000006701">
    <property type="component" value="Unassembled WGS sequence"/>
</dbReference>
<dbReference type="GO" id="GO:0005576">
    <property type="term" value="C:extracellular region"/>
    <property type="evidence" value="ECO:0007669"/>
    <property type="project" value="UniProtKB-SubCell"/>
</dbReference>
<dbReference type="GO" id="GO:0046556">
    <property type="term" value="F:alpha-L-arabinofuranosidase activity"/>
    <property type="evidence" value="ECO:0007669"/>
    <property type="project" value="UniProtKB-EC"/>
</dbReference>
<dbReference type="GO" id="GO:0031222">
    <property type="term" value="P:arabinan catabolic process"/>
    <property type="evidence" value="ECO:0007669"/>
    <property type="project" value="UniProtKB-UniPathway"/>
</dbReference>
<dbReference type="GO" id="GO:0046373">
    <property type="term" value="P:L-arabinose metabolic process"/>
    <property type="evidence" value="ECO:0007669"/>
    <property type="project" value="InterPro"/>
</dbReference>
<dbReference type="FunFam" id="3.20.20.80:FF:000110">
    <property type="entry name" value="Alpha-L-arabinofuranosidase C"/>
    <property type="match status" value="1"/>
</dbReference>
<dbReference type="Gene3D" id="3.20.20.80">
    <property type="entry name" value="Glycosidases"/>
    <property type="match status" value="1"/>
</dbReference>
<dbReference type="Gene3D" id="2.60.40.1180">
    <property type="entry name" value="Golgi alpha-mannosidase II"/>
    <property type="match status" value="1"/>
</dbReference>
<dbReference type="InterPro" id="IPR010720">
    <property type="entry name" value="Alpha-L-AF_C"/>
</dbReference>
<dbReference type="InterPro" id="IPR013780">
    <property type="entry name" value="Glyco_hydro_b"/>
</dbReference>
<dbReference type="InterPro" id="IPR017853">
    <property type="entry name" value="Glycoside_hydrolase_SF"/>
</dbReference>
<dbReference type="PANTHER" id="PTHR43576:SF3">
    <property type="entry name" value="ALPHA-L-ARABINOFURANOSIDASE C"/>
    <property type="match status" value="1"/>
</dbReference>
<dbReference type="PANTHER" id="PTHR43576">
    <property type="entry name" value="ALPHA-L-ARABINOFURANOSIDASE C-RELATED"/>
    <property type="match status" value="1"/>
</dbReference>
<dbReference type="Pfam" id="PF06964">
    <property type="entry name" value="Alpha-L-AF_C"/>
    <property type="match status" value="1"/>
</dbReference>
<dbReference type="SMART" id="SM00813">
    <property type="entry name" value="Alpha-L-AF_C"/>
    <property type="match status" value="1"/>
</dbReference>
<dbReference type="SUPFAM" id="SSF51445">
    <property type="entry name" value="(Trans)glycosidases"/>
    <property type="match status" value="1"/>
</dbReference>
<dbReference type="SUPFAM" id="SSF51011">
    <property type="entry name" value="Glycosyl hydrolase domain"/>
    <property type="match status" value="1"/>
</dbReference>
<keyword id="KW-0119">Carbohydrate metabolism</keyword>
<keyword id="KW-0325">Glycoprotein</keyword>
<keyword id="KW-0326">Glycosidase</keyword>
<keyword id="KW-0378">Hydrolase</keyword>
<keyword id="KW-0624">Polysaccharide degradation</keyword>
<keyword id="KW-1185">Reference proteome</keyword>
<keyword id="KW-0964">Secreted</keyword>
<keyword id="KW-0732">Signal</keyword>
<evidence type="ECO:0000250" key="1"/>
<evidence type="ECO:0000255" key="2"/>
<evidence type="ECO:0000305" key="3"/>
<feature type="signal peptide" evidence="2">
    <location>
        <begin position="1"/>
        <end status="unknown"/>
    </location>
</feature>
<feature type="chain" id="PRO_0000394610" description="Probable alpha-L-arabinofuranosidase C">
    <location>
        <begin status="unknown"/>
        <end position="505"/>
    </location>
</feature>
<feature type="glycosylation site" description="N-linked (GlcNAc...) asparagine" evidence="2">
    <location>
        <position position="152"/>
    </location>
</feature>
<feature type="glycosylation site" description="N-linked (GlcNAc...) asparagine" evidence="2">
    <location>
        <position position="269"/>
    </location>
</feature>
<feature type="glycosylation site" description="N-linked (GlcNAc...) asparagine" evidence="2">
    <location>
        <position position="438"/>
    </location>
</feature>
<proteinExistence type="inferred from homology"/>
<sequence length="505" mass="56416">MTTFTKLSEQETPSIAVHASRRISKINPNIYAGFTEHMGRCIYGGIYDPGNPLSDENGFRKDVLEALKELNIPVVRYPGGNFMATYHWIDGVGPKDQRPSRPELAWLGTETNQFGTDEFMKWCELLGTEPYFCLNFGTGTLDEALAWVEYCNGTRDTYYANLRRKNGREEPYNIKYWALGNEVWGPWQVAQTTKEEYAHKAYQWAKALKLLDPTLKLILCGQDGTASWDYYTLKHCILPVNSPLSTSAVPLIDMHSIHLYTSSSSHLPNVTAPLAAERAIEITSSLIDLAMIENGVPNTQLRPTICFDEWNVWDPIRAEGSKGAEESYTLSDALAVAVWLNVFVRKSKDVGMACIAQTVNVISPLMTTKDGIIKQTTWWPLYLFSKYMRGWTINTHVSCGTYEGETAPSWVRTVKDTPWLDVSATLGEDGYVNVAVVNISEDKDIESKFEGAAGEVAVFTVNGDSVSACNMNGKQEVGVTESTWDGKGAYAFPKHSLTLLRWKAE</sequence>
<organism>
    <name type="scientific">Aspergillus clavatus (strain ATCC 1007 / CBS 513.65 / DSM 816 / NCTC 3887 / NRRL 1 / QM 1276 / 107)</name>
    <dbReference type="NCBI Taxonomy" id="344612"/>
    <lineage>
        <taxon>Eukaryota</taxon>
        <taxon>Fungi</taxon>
        <taxon>Dikarya</taxon>
        <taxon>Ascomycota</taxon>
        <taxon>Pezizomycotina</taxon>
        <taxon>Eurotiomycetes</taxon>
        <taxon>Eurotiomycetidae</taxon>
        <taxon>Eurotiales</taxon>
        <taxon>Aspergillaceae</taxon>
        <taxon>Aspergillus</taxon>
        <taxon>Aspergillus subgen. Fumigati</taxon>
    </lineage>
</organism>